<feature type="signal peptide" evidence="1">
    <location>
        <begin position="1"/>
        <end position="36"/>
    </location>
</feature>
<feature type="chain" id="PRO_0000438372" description="DnaJ protein ERDJ7">
    <location>
        <begin position="37"/>
        <end position="309"/>
    </location>
</feature>
<feature type="topological domain" description="Lumenal" evidence="7">
    <location>
        <begin position="37"/>
        <end position="130"/>
    </location>
</feature>
<feature type="transmembrane region" description="Helical" evidence="1">
    <location>
        <begin position="131"/>
        <end position="151"/>
    </location>
</feature>
<feature type="topological domain" description="Cytoplasmic" evidence="7">
    <location>
        <begin position="152"/>
        <end position="219"/>
    </location>
</feature>
<feature type="transmembrane region" description="Helical" evidence="1">
    <location>
        <begin position="220"/>
        <end position="242"/>
    </location>
</feature>
<feature type="topological domain" description="Lumenal" evidence="7">
    <location>
        <begin position="243"/>
        <end position="309"/>
    </location>
</feature>
<feature type="domain" description="J" evidence="2">
    <location>
        <begin position="43"/>
        <end position="107"/>
    </location>
</feature>
<feature type="glycosylation site" description="N-linked (GlcNAc...) asparagine" evidence="3">
    <location>
        <position position="55"/>
    </location>
</feature>
<name>DJC79_ORYSJ</name>
<organism>
    <name type="scientific">Oryza sativa subsp. japonica</name>
    <name type="common">Rice</name>
    <dbReference type="NCBI Taxonomy" id="39947"/>
    <lineage>
        <taxon>Eukaryota</taxon>
        <taxon>Viridiplantae</taxon>
        <taxon>Streptophyta</taxon>
        <taxon>Embryophyta</taxon>
        <taxon>Tracheophyta</taxon>
        <taxon>Spermatophyta</taxon>
        <taxon>Magnoliopsida</taxon>
        <taxon>Liliopsida</taxon>
        <taxon>Poales</taxon>
        <taxon>Poaceae</taxon>
        <taxon>BOP clade</taxon>
        <taxon>Oryzoideae</taxon>
        <taxon>Oryzeae</taxon>
        <taxon>Oryzinae</taxon>
        <taxon>Oryza</taxon>
        <taxon>Oryza sativa</taxon>
    </lineage>
</organism>
<evidence type="ECO:0000255" key="1"/>
<evidence type="ECO:0000255" key="2">
    <source>
        <dbReference type="PROSITE-ProRule" id="PRU00286"/>
    </source>
</evidence>
<evidence type="ECO:0000255" key="3">
    <source>
        <dbReference type="PROSITE-ProRule" id="PRU00498"/>
    </source>
</evidence>
<evidence type="ECO:0000269" key="4">
    <source>
    </source>
</evidence>
<evidence type="ECO:0000303" key="5">
    <source>
    </source>
</evidence>
<evidence type="ECO:0000303" key="6">
    <source>
    </source>
</evidence>
<evidence type="ECO:0000305" key="7"/>
<evidence type="ECO:0000305" key="8">
    <source>
    </source>
</evidence>
<evidence type="ECO:0000312" key="9">
    <source>
        <dbReference type="EMBL" id="ABA97294.1"/>
    </source>
</evidence>
<evidence type="ECO:0000312" key="10">
    <source>
        <dbReference type="EMBL" id="BAF29535.1"/>
    </source>
</evidence>
<protein>
    <recommendedName>
        <fullName evidence="7">DnaJ protein ERDJ7</fullName>
    </recommendedName>
    <alternativeName>
        <fullName evidence="7">Chaperone protein dnaJ C79</fullName>
        <shortName evidence="5">OsDjC79</shortName>
    </alternativeName>
    <alternativeName>
        <fullName evidence="7">Endoplasmic reticulum dnaJ domain-containing protein 7</fullName>
        <shortName evidence="6">OsERdj7</shortName>
    </alternativeName>
</protein>
<dbReference type="EMBL" id="DP000011">
    <property type="protein sequence ID" value="ABA97294.1"/>
    <property type="molecule type" value="Genomic_DNA"/>
</dbReference>
<dbReference type="EMBL" id="DP000011">
    <property type="protein sequence ID" value="ABA97295.1"/>
    <property type="molecule type" value="Genomic_DNA"/>
</dbReference>
<dbReference type="EMBL" id="AP008218">
    <property type="protein sequence ID" value="BAF29535.1"/>
    <property type="molecule type" value="Genomic_DNA"/>
</dbReference>
<dbReference type="EMBL" id="AP014968">
    <property type="protein sequence ID" value="BAT16577.1"/>
    <property type="molecule type" value="Genomic_DNA"/>
</dbReference>
<dbReference type="RefSeq" id="XP_015620498.1">
    <property type="nucleotide sequence ID" value="XM_015765012.1"/>
</dbReference>
<dbReference type="RefSeq" id="XP_015620499.1">
    <property type="nucleotide sequence ID" value="XM_015765013.1"/>
</dbReference>
<dbReference type="SMR" id="Q2QUP1"/>
<dbReference type="FunCoup" id="Q2QUP1">
    <property type="interactions" value="948"/>
</dbReference>
<dbReference type="STRING" id="39947.Q2QUP1"/>
<dbReference type="GlyCosmos" id="Q2QUP1">
    <property type="glycosylation" value="1 site, No reported glycans"/>
</dbReference>
<dbReference type="PaxDb" id="39947-Q2QUP1"/>
<dbReference type="EnsemblPlants" id="Os12t0258200-01">
    <property type="protein sequence ID" value="Os12t0258200-01"/>
    <property type="gene ID" value="Os12g0258200"/>
</dbReference>
<dbReference type="Gramene" id="Os12t0258200-01">
    <property type="protein sequence ID" value="Os12t0258200-01"/>
    <property type="gene ID" value="Os12g0258200"/>
</dbReference>
<dbReference type="KEGG" id="dosa:Os12g0258200"/>
<dbReference type="eggNOG" id="KOG0722">
    <property type="taxonomic scope" value="Eukaryota"/>
</dbReference>
<dbReference type="HOGENOM" id="CLU_055735_1_0_1"/>
<dbReference type="InParanoid" id="Q2QUP1"/>
<dbReference type="OMA" id="WFWRYTV"/>
<dbReference type="OrthoDB" id="10250354at2759"/>
<dbReference type="Proteomes" id="UP000000763">
    <property type="component" value="Chromosome 12"/>
</dbReference>
<dbReference type="Proteomes" id="UP000059680">
    <property type="component" value="Chromosome 12"/>
</dbReference>
<dbReference type="GO" id="GO:0005789">
    <property type="term" value="C:endoplasmic reticulum membrane"/>
    <property type="evidence" value="ECO:0000314"/>
    <property type="project" value="UniProtKB"/>
</dbReference>
<dbReference type="GO" id="GO:0006457">
    <property type="term" value="P:protein folding"/>
    <property type="evidence" value="ECO:0000318"/>
    <property type="project" value="GO_Central"/>
</dbReference>
<dbReference type="CDD" id="cd06257">
    <property type="entry name" value="DnaJ"/>
    <property type="match status" value="1"/>
</dbReference>
<dbReference type="FunFam" id="1.10.287.110:FF:000050">
    <property type="entry name" value="Chaperone protein dnaJ 50"/>
    <property type="match status" value="1"/>
</dbReference>
<dbReference type="Gene3D" id="1.10.287.110">
    <property type="entry name" value="DnaJ domain"/>
    <property type="match status" value="1"/>
</dbReference>
<dbReference type="InterPro" id="IPR001623">
    <property type="entry name" value="DnaJ_domain"/>
</dbReference>
<dbReference type="InterPro" id="IPR018253">
    <property type="entry name" value="DnaJ_domain_CS"/>
</dbReference>
<dbReference type="InterPro" id="IPR044632">
    <property type="entry name" value="DNAJC25-like"/>
</dbReference>
<dbReference type="InterPro" id="IPR036869">
    <property type="entry name" value="J_dom_sf"/>
</dbReference>
<dbReference type="PANTHER" id="PTHR44176">
    <property type="entry name" value="DNAJ HOMOLOG SUBFAMILY C MEMBER 25"/>
    <property type="match status" value="1"/>
</dbReference>
<dbReference type="PANTHER" id="PTHR44176:SF1">
    <property type="entry name" value="DNAJ HOMOLOG SUBFAMILY C MEMBER 25"/>
    <property type="match status" value="1"/>
</dbReference>
<dbReference type="Pfam" id="PF00226">
    <property type="entry name" value="DnaJ"/>
    <property type="match status" value="1"/>
</dbReference>
<dbReference type="PRINTS" id="PR00625">
    <property type="entry name" value="JDOMAIN"/>
</dbReference>
<dbReference type="SMART" id="SM00271">
    <property type="entry name" value="DnaJ"/>
    <property type="match status" value="1"/>
</dbReference>
<dbReference type="SUPFAM" id="SSF46565">
    <property type="entry name" value="Chaperone J-domain"/>
    <property type="match status" value="1"/>
</dbReference>
<dbReference type="PROSITE" id="PS00636">
    <property type="entry name" value="DNAJ_1"/>
    <property type="match status" value="1"/>
</dbReference>
<dbReference type="PROSITE" id="PS50076">
    <property type="entry name" value="DNAJ_2"/>
    <property type="match status" value="1"/>
</dbReference>
<sequence length="309" mass="36163">MSQVGSAGEGSNSMAAAPPPRLLLLVVLLLVPVSNAIYCEEDDCYDLLGVKQDANVSEIKKAYYKLSLKHHPDKNPDPESRKLFVKIANAYEILKDESTRGQYDYAIAHPEEVFYNTAQYYRAYYGHKTDPRAVLIGLLLIISAFQYLNQFGRYSKAIETVKQTPAYKNRLKALEFERTGGISSKKKGHKQMDKKVEEVLSNEVELQIQGVEKPSLWRLYGVQFILLPYSIGKVLSWKFCWFWRYRIKKLPYAWEDACYLTRMSLKIPANTWENIDDYRKENLVMKRLWEKNNMERYIAEMRKESKRRR</sequence>
<proteinExistence type="inferred from homology"/>
<gene>
    <name evidence="6" type="primary">ERDJ7</name>
    <name evidence="7" type="synonym">DJC79</name>
    <name evidence="10" type="ordered locus">Os12g0258200</name>
    <name evidence="9" type="ordered locus">LOC_Os12g15590</name>
</gene>
<reference key="1">
    <citation type="journal article" date="2005" name="BMC Biol.">
        <title>The sequence of rice chromosomes 11 and 12, rich in disease resistance genes and recent gene duplications.</title>
        <authorList>
            <consortium name="The rice chromosomes 11 and 12 sequencing consortia"/>
        </authorList>
    </citation>
    <scope>NUCLEOTIDE SEQUENCE [LARGE SCALE GENOMIC DNA]</scope>
    <source>
        <strain>cv. Nipponbare</strain>
    </source>
</reference>
<reference key="2">
    <citation type="journal article" date="2005" name="Nature">
        <title>The map-based sequence of the rice genome.</title>
        <authorList>
            <consortium name="International rice genome sequencing project (IRGSP)"/>
        </authorList>
    </citation>
    <scope>NUCLEOTIDE SEQUENCE [LARGE SCALE GENOMIC DNA]</scope>
    <source>
        <strain>cv. Nipponbare</strain>
    </source>
</reference>
<reference key="3">
    <citation type="journal article" date="2008" name="Nucleic Acids Res.">
        <title>The rice annotation project database (RAP-DB): 2008 update.</title>
        <authorList>
            <consortium name="The rice annotation project (RAP)"/>
        </authorList>
    </citation>
    <scope>GENOME REANNOTATION</scope>
    <source>
        <strain>cv. Nipponbare</strain>
    </source>
</reference>
<reference key="4">
    <citation type="journal article" date="2013" name="Rice">
        <title>Improvement of the Oryza sativa Nipponbare reference genome using next generation sequence and optical map data.</title>
        <authorList>
            <person name="Kawahara Y."/>
            <person name="de la Bastide M."/>
            <person name="Hamilton J.P."/>
            <person name="Kanamori H."/>
            <person name="McCombie W.R."/>
            <person name="Ouyang S."/>
            <person name="Schwartz D.C."/>
            <person name="Tanaka T."/>
            <person name="Wu J."/>
            <person name="Zhou S."/>
            <person name="Childs K.L."/>
            <person name="Davidson R.M."/>
            <person name="Lin H."/>
            <person name="Quesada-Ocampo L."/>
            <person name="Vaillancourt B."/>
            <person name="Sakai H."/>
            <person name="Lee S.S."/>
            <person name="Kim J."/>
            <person name="Numa H."/>
            <person name="Itoh T."/>
            <person name="Buell C.R."/>
            <person name="Matsumoto T."/>
        </authorList>
    </citation>
    <scope>GENOME REANNOTATION</scope>
    <source>
        <strain>cv. Nipponbare</strain>
    </source>
</reference>
<reference key="5">
    <citation type="journal article" date="2013" name="Cell Stress Chaperones">
        <title>Functional relevance of J-protein family of rice (Oryza sativa).</title>
        <authorList>
            <person name="Sarkar N.K."/>
            <person name="Thapar U."/>
            <person name="Kundnani P."/>
            <person name="Panwar P."/>
            <person name="Grover A."/>
        </authorList>
    </citation>
    <scope>GENE FAMILY</scope>
    <scope>NOMENCLATURE</scope>
</reference>
<reference key="6">
    <citation type="journal article" date="2013" name="J. Exp. Bot.">
        <title>Analysis of rice ER-resident J-proteins reveals diversity and functional differentiation of the ER-resident Hsp70 system in plants.</title>
        <authorList>
            <person name="Ohta M."/>
            <person name="Wakasa Y."/>
            <person name="Takahashi H."/>
            <person name="Hayashi S."/>
            <person name="Kudo K."/>
            <person name="Takaiwa F."/>
        </authorList>
    </citation>
    <scope>FUNCTION</scope>
    <scope>SUBCELLULAR LOCATION</scope>
</reference>
<keyword id="KW-0143">Chaperone</keyword>
<keyword id="KW-0256">Endoplasmic reticulum</keyword>
<keyword id="KW-0325">Glycoprotein</keyword>
<keyword id="KW-0472">Membrane</keyword>
<keyword id="KW-1185">Reference proteome</keyword>
<keyword id="KW-0732">Signal</keyword>
<keyword id="KW-0812">Transmembrane</keyword>
<keyword id="KW-1133">Transmembrane helix</keyword>
<comment type="function">
    <text evidence="8">May play a role in protein folding in the endoplasmic reticulum.</text>
</comment>
<comment type="subcellular location">
    <subcellularLocation>
        <location evidence="4">Endoplasmic reticulum membrane</location>
        <topology evidence="1">Multi-pass membrane protein</topology>
    </subcellularLocation>
</comment>
<accession>Q2QUP1</accession>